<sequence length="336" mass="36430">MFGQRLDTLGAMSSSVSSPSPETGKKILLAAPRGYCAGVDRAVETVERALEEYGAPIYVRKEIVHNRYVVDTLAEKGVIFVEEASEAPEGAHMVFSAHGVSPAVKEEAAAKNLQAIDAACPLVTKVHNEVKRFDKQGFHILFIGHEGHEEVEGTMGHSLDRTHLVDGIESIPGLPAFLADEPNLIWLSQTTLSVDETMEIVRELKKVYPQLQDPPSDDICYATQNRQVAVKAIAERCDLMIVVGSTNSSNSVRLVEVALQAGAKNAYLVDYAHQIDEAWLDGVQTIGISSGASVPEILVTGVLERLAGYGFDDVEEVTTAAEKIVFALPRVLRPAR</sequence>
<keyword id="KW-0004">4Fe-4S</keyword>
<keyword id="KW-0408">Iron</keyword>
<keyword id="KW-0411">Iron-sulfur</keyword>
<keyword id="KW-0414">Isoprene biosynthesis</keyword>
<keyword id="KW-0479">Metal-binding</keyword>
<keyword id="KW-0560">Oxidoreductase</keyword>
<keyword id="KW-1185">Reference proteome</keyword>
<protein>
    <recommendedName>
        <fullName evidence="1">4-hydroxy-3-methylbut-2-enyl diphosphate reductase</fullName>
        <shortName evidence="1">HMBPP reductase</shortName>
        <ecNumber evidence="1">1.17.7.4</ecNumber>
    </recommendedName>
</protein>
<gene>
    <name evidence="1" type="primary">ispH</name>
    <name type="ordered locus">CE1079</name>
</gene>
<accession>Q8FQP0</accession>
<evidence type="ECO:0000255" key="1">
    <source>
        <dbReference type="HAMAP-Rule" id="MF_00191"/>
    </source>
</evidence>
<evidence type="ECO:0000256" key="2">
    <source>
        <dbReference type="SAM" id="MobiDB-lite"/>
    </source>
</evidence>
<dbReference type="EC" id="1.17.7.4" evidence="1"/>
<dbReference type="EMBL" id="BA000035">
    <property type="protein sequence ID" value="BAC17889.1"/>
    <property type="molecule type" value="Genomic_DNA"/>
</dbReference>
<dbReference type="SMR" id="Q8FQP0"/>
<dbReference type="STRING" id="196164.gene:10741487"/>
<dbReference type="KEGG" id="cef:CE1079"/>
<dbReference type="eggNOG" id="COG0761">
    <property type="taxonomic scope" value="Bacteria"/>
</dbReference>
<dbReference type="HOGENOM" id="CLU_027486_1_0_11"/>
<dbReference type="UniPathway" id="UPA00056">
    <property type="reaction ID" value="UER00097"/>
</dbReference>
<dbReference type="UniPathway" id="UPA00059">
    <property type="reaction ID" value="UER00105"/>
</dbReference>
<dbReference type="Proteomes" id="UP000001409">
    <property type="component" value="Chromosome"/>
</dbReference>
<dbReference type="GO" id="GO:0051539">
    <property type="term" value="F:4 iron, 4 sulfur cluster binding"/>
    <property type="evidence" value="ECO:0007669"/>
    <property type="project" value="UniProtKB-UniRule"/>
</dbReference>
<dbReference type="GO" id="GO:0051745">
    <property type="term" value="F:4-hydroxy-3-methylbut-2-enyl diphosphate reductase activity"/>
    <property type="evidence" value="ECO:0007669"/>
    <property type="project" value="UniProtKB-UniRule"/>
</dbReference>
<dbReference type="GO" id="GO:0046872">
    <property type="term" value="F:metal ion binding"/>
    <property type="evidence" value="ECO:0007669"/>
    <property type="project" value="UniProtKB-KW"/>
</dbReference>
<dbReference type="GO" id="GO:0050992">
    <property type="term" value="P:dimethylallyl diphosphate biosynthetic process"/>
    <property type="evidence" value="ECO:0007669"/>
    <property type="project" value="UniProtKB-UniRule"/>
</dbReference>
<dbReference type="GO" id="GO:0019288">
    <property type="term" value="P:isopentenyl diphosphate biosynthetic process, methylerythritol 4-phosphate pathway"/>
    <property type="evidence" value="ECO:0007669"/>
    <property type="project" value="UniProtKB-UniRule"/>
</dbReference>
<dbReference type="GO" id="GO:0016114">
    <property type="term" value="P:terpenoid biosynthetic process"/>
    <property type="evidence" value="ECO:0007669"/>
    <property type="project" value="UniProtKB-UniRule"/>
</dbReference>
<dbReference type="CDD" id="cd13944">
    <property type="entry name" value="lytB_ispH"/>
    <property type="match status" value="1"/>
</dbReference>
<dbReference type="Gene3D" id="3.40.50.11270">
    <property type="match status" value="1"/>
</dbReference>
<dbReference type="Gene3D" id="3.40.1010.20">
    <property type="entry name" value="4-hydroxy-3-methylbut-2-enyl diphosphate reductase, catalytic domain"/>
    <property type="match status" value="2"/>
</dbReference>
<dbReference type="HAMAP" id="MF_00191">
    <property type="entry name" value="IspH"/>
    <property type="match status" value="1"/>
</dbReference>
<dbReference type="InterPro" id="IPR003451">
    <property type="entry name" value="LytB/IspH"/>
</dbReference>
<dbReference type="NCBIfam" id="TIGR00216">
    <property type="entry name" value="ispH_lytB"/>
    <property type="match status" value="1"/>
</dbReference>
<dbReference type="NCBIfam" id="NF002189">
    <property type="entry name" value="PRK01045.1-3"/>
    <property type="match status" value="1"/>
</dbReference>
<dbReference type="NCBIfam" id="NF002190">
    <property type="entry name" value="PRK01045.1-4"/>
    <property type="match status" value="1"/>
</dbReference>
<dbReference type="PANTHER" id="PTHR30426">
    <property type="entry name" value="4-HYDROXY-3-METHYLBUT-2-ENYL DIPHOSPHATE REDUCTASE"/>
    <property type="match status" value="1"/>
</dbReference>
<dbReference type="PANTHER" id="PTHR30426:SF0">
    <property type="entry name" value="4-HYDROXY-3-METHYLBUT-2-ENYL DIPHOSPHATE REDUCTASE"/>
    <property type="match status" value="1"/>
</dbReference>
<dbReference type="Pfam" id="PF02401">
    <property type="entry name" value="LYTB"/>
    <property type="match status" value="1"/>
</dbReference>
<comment type="function">
    <text evidence="1">Catalyzes the conversion of 1-hydroxy-2-methyl-2-(E)-butenyl 4-diphosphate (HMBPP) into a mixture of isopentenyl diphosphate (IPP) and dimethylallyl diphosphate (DMAPP). Acts in the terminal step of the DOXP/MEP pathway for isoprenoid precursor biosynthesis.</text>
</comment>
<comment type="catalytic activity">
    <reaction evidence="1">
        <text>isopentenyl diphosphate + 2 oxidized [2Fe-2S]-[ferredoxin] + H2O = (2E)-4-hydroxy-3-methylbut-2-enyl diphosphate + 2 reduced [2Fe-2S]-[ferredoxin] + 2 H(+)</text>
        <dbReference type="Rhea" id="RHEA:24488"/>
        <dbReference type="Rhea" id="RHEA-COMP:10000"/>
        <dbReference type="Rhea" id="RHEA-COMP:10001"/>
        <dbReference type="ChEBI" id="CHEBI:15377"/>
        <dbReference type="ChEBI" id="CHEBI:15378"/>
        <dbReference type="ChEBI" id="CHEBI:33737"/>
        <dbReference type="ChEBI" id="CHEBI:33738"/>
        <dbReference type="ChEBI" id="CHEBI:128753"/>
        <dbReference type="ChEBI" id="CHEBI:128769"/>
        <dbReference type="EC" id="1.17.7.4"/>
    </reaction>
</comment>
<comment type="catalytic activity">
    <reaction evidence="1">
        <text>dimethylallyl diphosphate + 2 oxidized [2Fe-2S]-[ferredoxin] + H2O = (2E)-4-hydroxy-3-methylbut-2-enyl diphosphate + 2 reduced [2Fe-2S]-[ferredoxin] + 2 H(+)</text>
        <dbReference type="Rhea" id="RHEA:24825"/>
        <dbReference type="Rhea" id="RHEA-COMP:10000"/>
        <dbReference type="Rhea" id="RHEA-COMP:10001"/>
        <dbReference type="ChEBI" id="CHEBI:15377"/>
        <dbReference type="ChEBI" id="CHEBI:15378"/>
        <dbReference type="ChEBI" id="CHEBI:33737"/>
        <dbReference type="ChEBI" id="CHEBI:33738"/>
        <dbReference type="ChEBI" id="CHEBI:57623"/>
        <dbReference type="ChEBI" id="CHEBI:128753"/>
        <dbReference type="EC" id="1.17.7.4"/>
    </reaction>
</comment>
<comment type="cofactor">
    <cofactor evidence="1">
        <name>[4Fe-4S] cluster</name>
        <dbReference type="ChEBI" id="CHEBI:49883"/>
    </cofactor>
    <text evidence="1">Binds 1 [4Fe-4S] cluster per subunit.</text>
</comment>
<comment type="pathway">
    <text evidence="1">Isoprenoid biosynthesis; dimethylallyl diphosphate biosynthesis; dimethylallyl diphosphate from (2E)-4-hydroxy-3-methylbutenyl diphosphate: step 1/1.</text>
</comment>
<comment type="pathway">
    <text evidence="1">Isoprenoid biosynthesis; isopentenyl diphosphate biosynthesis via DXP pathway; isopentenyl diphosphate from 1-deoxy-D-xylulose 5-phosphate: step 6/6.</text>
</comment>
<comment type="similarity">
    <text evidence="1">Belongs to the IspH family.</text>
</comment>
<feature type="chain" id="PRO_0000128807" description="4-hydroxy-3-methylbut-2-enyl diphosphate reductase">
    <location>
        <begin position="1"/>
        <end position="336"/>
    </location>
</feature>
<feature type="region of interest" description="Disordered" evidence="2">
    <location>
        <begin position="1"/>
        <end position="23"/>
    </location>
</feature>
<feature type="active site" description="Proton donor" evidence="1">
    <location>
        <position position="150"/>
    </location>
</feature>
<feature type="binding site" evidence="1">
    <location>
        <position position="36"/>
    </location>
    <ligand>
        <name>[4Fe-4S] cluster</name>
        <dbReference type="ChEBI" id="CHEBI:49883"/>
    </ligand>
</feature>
<feature type="binding site" evidence="1">
    <location>
        <position position="65"/>
    </location>
    <ligand>
        <name>(2E)-4-hydroxy-3-methylbut-2-enyl diphosphate</name>
        <dbReference type="ChEBI" id="CHEBI:128753"/>
    </ligand>
</feature>
<feature type="binding site" evidence="1">
    <location>
        <position position="65"/>
    </location>
    <ligand>
        <name>dimethylallyl diphosphate</name>
        <dbReference type="ChEBI" id="CHEBI:57623"/>
    </ligand>
</feature>
<feature type="binding site" evidence="1">
    <location>
        <position position="65"/>
    </location>
    <ligand>
        <name>isopentenyl diphosphate</name>
        <dbReference type="ChEBI" id="CHEBI:128769"/>
    </ligand>
</feature>
<feature type="binding site" evidence="1">
    <location>
        <position position="98"/>
    </location>
    <ligand>
        <name>(2E)-4-hydroxy-3-methylbut-2-enyl diphosphate</name>
        <dbReference type="ChEBI" id="CHEBI:128753"/>
    </ligand>
</feature>
<feature type="binding site" evidence="1">
    <location>
        <position position="98"/>
    </location>
    <ligand>
        <name>dimethylallyl diphosphate</name>
        <dbReference type="ChEBI" id="CHEBI:57623"/>
    </ligand>
</feature>
<feature type="binding site" evidence="1">
    <location>
        <position position="98"/>
    </location>
    <ligand>
        <name>isopentenyl diphosphate</name>
        <dbReference type="ChEBI" id="CHEBI:128769"/>
    </ligand>
</feature>
<feature type="binding site" evidence="1">
    <location>
        <position position="120"/>
    </location>
    <ligand>
        <name>[4Fe-4S] cluster</name>
        <dbReference type="ChEBI" id="CHEBI:49883"/>
    </ligand>
</feature>
<feature type="binding site" evidence="1">
    <location>
        <position position="148"/>
    </location>
    <ligand>
        <name>(2E)-4-hydroxy-3-methylbut-2-enyl diphosphate</name>
        <dbReference type="ChEBI" id="CHEBI:128753"/>
    </ligand>
</feature>
<feature type="binding site" evidence="1">
    <location>
        <position position="148"/>
    </location>
    <ligand>
        <name>dimethylallyl diphosphate</name>
        <dbReference type="ChEBI" id="CHEBI:57623"/>
    </ligand>
</feature>
<feature type="binding site" evidence="1">
    <location>
        <position position="148"/>
    </location>
    <ligand>
        <name>isopentenyl diphosphate</name>
        <dbReference type="ChEBI" id="CHEBI:128769"/>
    </ligand>
</feature>
<feature type="binding site" evidence="1">
    <location>
        <position position="190"/>
    </location>
    <ligand>
        <name>(2E)-4-hydroxy-3-methylbut-2-enyl diphosphate</name>
        <dbReference type="ChEBI" id="CHEBI:128753"/>
    </ligand>
</feature>
<feature type="binding site" evidence="1">
    <location>
        <position position="220"/>
    </location>
    <ligand>
        <name>[4Fe-4S] cluster</name>
        <dbReference type="ChEBI" id="CHEBI:49883"/>
    </ligand>
</feature>
<feature type="binding site" evidence="1">
    <location>
        <position position="248"/>
    </location>
    <ligand>
        <name>(2E)-4-hydroxy-3-methylbut-2-enyl diphosphate</name>
        <dbReference type="ChEBI" id="CHEBI:128753"/>
    </ligand>
</feature>
<feature type="binding site" evidence="1">
    <location>
        <position position="248"/>
    </location>
    <ligand>
        <name>dimethylallyl diphosphate</name>
        <dbReference type="ChEBI" id="CHEBI:57623"/>
    </ligand>
</feature>
<feature type="binding site" evidence="1">
    <location>
        <position position="248"/>
    </location>
    <ligand>
        <name>isopentenyl diphosphate</name>
        <dbReference type="ChEBI" id="CHEBI:128769"/>
    </ligand>
</feature>
<feature type="binding site" evidence="1">
    <location>
        <position position="249"/>
    </location>
    <ligand>
        <name>(2E)-4-hydroxy-3-methylbut-2-enyl diphosphate</name>
        <dbReference type="ChEBI" id="CHEBI:128753"/>
    </ligand>
</feature>
<feature type="binding site" evidence="1">
    <location>
        <position position="249"/>
    </location>
    <ligand>
        <name>dimethylallyl diphosphate</name>
        <dbReference type="ChEBI" id="CHEBI:57623"/>
    </ligand>
</feature>
<feature type="binding site" evidence="1">
    <location>
        <position position="249"/>
    </location>
    <ligand>
        <name>isopentenyl diphosphate</name>
        <dbReference type="ChEBI" id="CHEBI:128769"/>
    </ligand>
</feature>
<feature type="binding site" evidence="1">
    <location>
        <position position="250"/>
    </location>
    <ligand>
        <name>(2E)-4-hydroxy-3-methylbut-2-enyl diphosphate</name>
        <dbReference type="ChEBI" id="CHEBI:128753"/>
    </ligand>
</feature>
<feature type="binding site" evidence="1">
    <location>
        <position position="250"/>
    </location>
    <ligand>
        <name>dimethylallyl diphosphate</name>
        <dbReference type="ChEBI" id="CHEBI:57623"/>
    </ligand>
</feature>
<feature type="binding site" evidence="1">
    <location>
        <position position="250"/>
    </location>
    <ligand>
        <name>isopentenyl diphosphate</name>
        <dbReference type="ChEBI" id="CHEBI:128769"/>
    </ligand>
</feature>
<feature type="binding site" evidence="1">
    <location>
        <position position="293"/>
    </location>
    <ligand>
        <name>(2E)-4-hydroxy-3-methylbut-2-enyl diphosphate</name>
        <dbReference type="ChEBI" id="CHEBI:128753"/>
    </ligand>
</feature>
<feature type="binding site" evidence="1">
    <location>
        <position position="293"/>
    </location>
    <ligand>
        <name>dimethylallyl diphosphate</name>
        <dbReference type="ChEBI" id="CHEBI:57623"/>
    </ligand>
</feature>
<feature type="binding site" evidence="1">
    <location>
        <position position="293"/>
    </location>
    <ligand>
        <name>isopentenyl diphosphate</name>
        <dbReference type="ChEBI" id="CHEBI:128769"/>
    </ligand>
</feature>
<reference key="1">
    <citation type="journal article" date="2003" name="Genome Res.">
        <title>Comparative complete genome sequence analysis of the amino acid replacements responsible for the thermostability of Corynebacterium efficiens.</title>
        <authorList>
            <person name="Nishio Y."/>
            <person name="Nakamura Y."/>
            <person name="Kawarabayasi Y."/>
            <person name="Usuda Y."/>
            <person name="Kimura E."/>
            <person name="Sugimoto S."/>
            <person name="Matsui K."/>
            <person name="Yamagishi A."/>
            <person name="Kikuchi H."/>
            <person name="Ikeo K."/>
            <person name="Gojobori T."/>
        </authorList>
    </citation>
    <scope>NUCLEOTIDE SEQUENCE [LARGE SCALE GENOMIC DNA]</scope>
    <source>
        <strain>DSM 44549 / YS-314 / AJ 12310 / JCM 11189 / NBRC 100395</strain>
    </source>
</reference>
<organism>
    <name type="scientific">Corynebacterium efficiens (strain DSM 44549 / YS-314 / AJ 12310 / JCM 11189 / NBRC 100395)</name>
    <dbReference type="NCBI Taxonomy" id="196164"/>
    <lineage>
        <taxon>Bacteria</taxon>
        <taxon>Bacillati</taxon>
        <taxon>Actinomycetota</taxon>
        <taxon>Actinomycetes</taxon>
        <taxon>Mycobacteriales</taxon>
        <taxon>Corynebacteriaceae</taxon>
        <taxon>Corynebacterium</taxon>
    </lineage>
</organism>
<proteinExistence type="inferred from homology"/>
<name>ISPH_COREF</name>